<gene>
    <name evidence="1" type="primary">valS</name>
    <name type="ordered locus">Pcar_2315</name>
</gene>
<comment type="function">
    <text evidence="1">Catalyzes the attachment of valine to tRNA(Val). As ValRS can inadvertently accommodate and process structurally similar amino acids such as threonine, to avoid such errors, it has a 'posttransfer' editing activity that hydrolyzes mischarged Thr-tRNA(Val) in a tRNA-dependent manner.</text>
</comment>
<comment type="catalytic activity">
    <reaction evidence="1">
        <text>tRNA(Val) + L-valine + ATP = L-valyl-tRNA(Val) + AMP + diphosphate</text>
        <dbReference type="Rhea" id="RHEA:10704"/>
        <dbReference type="Rhea" id="RHEA-COMP:9672"/>
        <dbReference type="Rhea" id="RHEA-COMP:9708"/>
        <dbReference type="ChEBI" id="CHEBI:30616"/>
        <dbReference type="ChEBI" id="CHEBI:33019"/>
        <dbReference type="ChEBI" id="CHEBI:57762"/>
        <dbReference type="ChEBI" id="CHEBI:78442"/>
        <dbReference type="ChEBI" id="CHEBI:78537"/>
        <dbReference type="ChEBI" id="CHEBI:456215"/>
        <dbReference type="EC" id="6.1.1.9"/>
    </reaction>
</comment>
<comment type="subunit">
    <text evidence="1">Monomer.</text>
</comment>
<comment type="subcellular location">
    <subcellularLocation>
        <location evidence="1">Cytoplasm</location>
    </subcellularLocation>
</comment>
<comment type="domain">
    <text evidence="1">ValRS has two distinct active sites: one for aminoacylation and one for editing. The misactivated threonine is translocated from the active site to the editing site.</text>
</comment>
<comment type="domain">
    <text evidence="1">The C-terminal coiled-coil domain is crucial for aminoacylation activity.</text>
</comment>
<comment type="similarity">
    <text evidence="1">Belongs to the class-I aminoacyl-tRNA synthetase family. ValS type 1 subfamily.</text>
</comment>
<comment type="sequence caution" evidence="2">
    <conflict type="erroneous initiation">
        <sequence resource="EMBL-CDS" id="ABA89554"/>
    </conflict>
</comment>
<organism>
    <name type="scientific">Syntrophotalea carbinolica (strain DSM 2380 / NBRC 103641 / GraBd1)</name>
    <name type="common">Pelobacter carbinolicus</name>
    <dbReference type="NCBI Taxonomy" id="338963"/>
    <lineage>
        <taxon>Bacteria</taxon>
        <taxon>Pseudomonadati</taxon>
        <taxon>Thermodesulfobacteriota</taxon>
        <taxon>Desulfuromonadia</taxon>
        <taxon>Desulfuromonadales</taxon>
        <taxon>Syntrophotaleaceae</taxon>
        <taxon>Syntrophotalea</taxon>
    </lineage>
</organism>
<evidence type="ECO:0000255" key="1">
    <source>
        <dbReference type="HAMAP-Rule" id="MF_02004"/>
    </source>
</evidence>
<evidence type="ECO:0000305" key="2"/>
<dbReference type="EC" id="6.1.1.9" evidence="1"/>
<dbReference type="EMBL" id="CP000142">
    <property type="protein sequence ID" value="ABA89554.2"/>
    <property type="status" value="ALT_INIT"/>
    <property type="molecule type" value="Genomic_DNA"/>
</dbReference>
<dbReference type="RefSeq" id="WP_011342074.1">
    <property type="nucleotide sequence ID" value="NC_007498.2"/>
</dbReference>
<dbReference type="SMR" id="Q3A253"/>
<dbReference type="STRING" id="338963.Pcar_2315"/>
<dbReference type="KEGG" id="pca:Pcar_2315"/>
<dbReference type="eggNOG" id="COG0525">
    <property type="taxonomic scope" value="Bacteria"/>
</dbReference>
<dbReference type="HOGENOM" id="CLU_001493_0_2_7"/>
<dbReference type="OrthoDB" id="9810365at2"/>
<dbReference type="Proteomes" id="UP000002534">
    <property type="component" value="Chromosome"/>
</dbReference>
<dbReference type="GO" id="GO:0005829">
    <property type="term" value="C:cytosol"/>
    <property type="evidence" value="ECO:0007669"/>
    <property type="project" value="TreeGrafter"/>
</dbReference>
<dbReference type="GO" id="GO:0002161">
    <property type="term" value="F:aminoacyl-tRNA deacylase activity"/>
    <property type="evidence" value="ECO:0007669"/>
    <property type="project" value="InterPro"/>
</dbReference>
<dbReference type="GO" id="GO:0005524">
    <property type="term" value="F:ATP binding"/>
    <property type="evidence" value="ECO:0007669"/>
    <property type="project" value="UniProtKB-UniRule"/>
</dbReference>
<dbReference type="GO" id="GO:0004832">
    <property type="term" value="F:valine-tRNA ligase activity"/>
    <property type="evidence" value="ECO:0007669"/>
    <property type="project" value="UniProtKB-UniRule"/>
</dbReference>
<dbReference type="GO" id="GO:0006438">
    <property type="term" value="P:valyl-tRNA aminoacylation"/>
    <property type="evidence" value="ECO:0007669"/>
    <property type="project" value="UniProtKB-UniRule"/>
</dbReference>
<dbReference type="CDD" id="cd07962">
    <property type="entry name" value="Anticodon_Ia_Val"/>
    <property type="match status" value="1"/>
</dbReference>
<dbReference type="CDD" id="cd00817">
    <property type="entry name" value="ValRS_core"/>
    <property type="match status" value="1"/>
</dbReference>
<dbReference type="FunFam" id="1.10.287.380:FF:000001">
    <property type="entry name" value="Valine--tRNA ligase"/>
    <property type="match status" value="1"/>
</dbReference>
<dbReference type="FunFam" id="1.10.730.10:FF:000014">
    <property type="entry name" value="Valine--tRNA ligase"/>
    <property type="match status" value="1"/>
</dbReference>
<dbReference type="FunFam" id="3.40.50.620:FF:000032">
    <property type="entry name" value="Valine--tRNA ligase"/>
    <property type="match status" value="1"/>
</dbReference>
<dbReference type="FunFam" id="3.40.50.620:FF:000098">
    <property type="entry name" value="Valine--tRNA ligase"/>
    <property type="match status" value="1"/>
</dbReference>
<dbReference type="FunFam" id="3.90.740.10:FF:000005">
    <property type="entry name" value="Valine--tRNA ligase, mitochondrial"/>
    <property type="match status" value="1"/>
</dbReference>
<dbReference type="Gene3D" id="3.40.50.620">
    <property type="entry name" value="HUPs"/>
    <property type="match status" value="2"/>
</dbReference>
<dbReference type="Gene3D" id="1.10.730.10">
    <property type="entry name" value="Isoleucyl-tRNA Synthetase, Domain 1"/>
    <property type="match status" value="1"/>
</dbReference>
<dbReference type="Gene3D" id="1.10.287.380">
    <property type="entry name" value="Valyl-tRNA synthetase, C-terminal domain"/>
    <property type="match status" value="1"/>
</dbReference>
<dbReference type="Gene3D" id="3.90.740.10">
    <property type="entry name" value="Valyl/Leucyl/Isoleucyl-tRNA synthetase, editing domain"/>
    <property type="match status" value="1"/>
</dbReference>
<dbReference type="HAMAP" id="MF_02004">
    <property type="entry name" value="Val_tRNA_synth_type1"/>
    <property type="match status" value="1"/>
</dbReference>
<dbReference type="InterPro" id="IPR001412">
    <property type="entry name" value="aa-tRNA-synth_I_CS"/>
</dbReference>
<dbReference type="InterPro" id="IPR002300">
    <property type="entry name" value="aa-tRNA-synth_Ia"/>
</dbReference>
<dbReference type="InterPro" id="IPR033705">
    <property type="entry name" value="Anticodon_Ia_Val"/>
</dbReference>
<dbReference type="InterPro" id="IPR013155">
    <property type="entry name" value="M/V/L/I-tRNA-synth_anticd-bd"/>
</dbReference>
<dbReference type="InterPro" id="IPR014729">
    <property type="entry name" value="Rossmann-like_a/b/a_fold"/>
</dbReference>
<dbReference type="InterPro" id="IPR010978">
    <property type="entry name" value="tRNA-bd_arm"/>
</dbReference>
<dbReference type="InterPro" id="IPR009080">
    <property type="entry name" value="tRNAsynth_Ia_anticodon-bd"/>
</dbReference>
<dbReference type="InterPro" id="IPR037118">
    <property type="entry name" value="Val-tRNA_synth_C_sf"/>
</dbReference>
<dbReference type="InterPro" id="IPR019499">
    <property type="entry name" value="Val-tRNA_synth_tRNA-bd"/>
</dbReference>
<dbReference type="InterPro" id="IPR009008">
    <property type="entry name" value="Val/Leu/Ile-tRNA-synth_edit"/>
</dbReference>
<dbReference type="InterPro" id="IPR002303">
    <property type="entry name" value="Valyl-tRNA_ligase"/>
</dbReference>
<dbReference type="NCBIfam" id="NF004349">
    <property type="entry name" value="PRK05729.1"/>
    <property type="match status" value="1"/>
</dbReference>
<dbReference type="NCBIfam" id="TIGR00422">
    <property type="entry name" value="valS"/>
    <property type="match status" value="1"/>
</dbReference>
<dbReference type="PANTHER" id="PTHR11946:SF93">
    <property type="entry name" value="VALINE--TRNA LIGASE, CHLOROPLASTIC_MITOCHONDRIAL 2"/>
    <property type="match status" value="1"/>
</dbReference>
<dbReference type="PANTHER" id="PTHR11946">
    <property type="entry name" value="VALYL-TRNA SYNTHETASES"/>
    <property type="match status" value="1"/>
</dbReference>
<dbReference type="Pfam" id="PF08264">
    <property type="entry name" value="Anticodon_1"/>
    <property type="match status" value="1"/>
</dbReference>
<dbReference type="Pfam" id="PF00133">
    <property type="entry name" value="tRNA-synt_1"/>
    <property type="match status" value="1"/>
</dbReference>
<dbReference type="Pfam" id="PF10458">
    <property type="entry name" value="Val_tRNA-synt_C"/>
    <property type="match status" value="1"/>
</dbReference>
<dbReference type="PRINTS" id="PR00986">
    <property type="entry name" value="TRNASYNTHVAL"/>
</dbReference>
<dbReference type="SUPFAM" id="SSF47323">
    <property type="entry name" value="Anticodon-binding domain of a subclass of class I aminoacyl-tRNA synthetases"/>
    <property type="match status" value="1"/>
</dbReference>
<dbReference type="SUPFAM" id="SSF52374">
    <property type="entry name" value="Nucleotidylyl transferase"/>
    <property type="match status" value="1"/>
</dbReference>
<dbReference type="SUPFAM" id="SSF46589">
    <property type="entry name" value="tRNA-binding arm"/>
    <property type="match status" value="1"/>
</dbReference>
<dbReference type="SUPFAM" id="SSF50677">
    <property type="entry name" value="ValRS/IleRS/LeuRS editing domain"/>
    <property type="match status" value="1"/>
</dbReference>
<dbReference type="PROSITE" id="PS00178">
    <property type="entry name" value="AA_TRNA_LIGASE_I"/>
    <property type="match status" value="1"/>
</dbReference>
<feature type="chain" id="PRO_0000224526" description="Valine--tRNA ligase">
    <location>
        <begin position="1"/>
        <end position="899"/>
    </location>
</feature>
<feature type="coiled-coil region" evidence="1">
    <location>
        <begin position="827"/>
        <end position="898"/>
    </location>
</feature>
<feature type="short sequence motif" description="'HIGH' region">
    <location>
        <begin position="60"/>
        <end position="70"/>
    </location>
</feature>
<feature type="short sequence motif" description="'KMSKS' region">
    <location>
        <begin position="539"/>
        <end position="543"/>
    </location>
</feature>
<feature type="binding site" evidence="1">
    <location>
        <position position="542"/>
    </location>
    <ligand>
        <name>ATP</name>
        <dbReference type="ChEBI" id="CHEBI:30616"/>
    </ligand>
</feature>
<accession>Q3A253</accession>
<keyword id="KW-0030">Aminoacyl-tRNA synthetase</keyword>
<keyword id="KW-0067">ATP-binding</keyword>
<keyword id="KW-0175">Coiled coil</keyword>
<keyword id="KW-0963">Cytoplasm</keyword>
<keyword id="KW-0436">Ligase</keyword>
<keyword id="KW-0547">Nucleotide-binding</keyword>
<keyword id="KW-0648">Protein biosynthesis</keyword>
<keyword id="KW-1185">Reference proteome</keyword>
<proteinExistence type="inferred from homology"/>
<reference key="1">
    <citation type="submission" date="2005-10" db="EMBL/GenBank/DDBJ databases">
        <title>Complete sequence of Pelobacter carbinolicus DSM 2380.</title>
        <authorList>
            <person name="Copeland A."/>
            <person name="Lucas S."/>
            <person name="Lapidus A."/>
            <person name="Barry K."/>
            <person name="Detter J.C."/>
            <person name="Glavina T."/>
            <person name="Hammon N."/>
            <person name="Israni S."/>
            <person name="Pitluck S."/>
            <person name="Chertkov O."/>
            <person name="Schmutz J."/>
            <person name="Larimer F."/>
            <person name="Land M."/>
            <person name="Kyrpides N."/>
            <person name="Ivanova N."/>
            <person name="Richardson P."/>
        </authorList>
    </citation>
    <scope>NUCLEOTIDE SEQUENCE [LARGE SCALE GENOMIC DNA]</scope>
    <source>
        <strain>DSM 2380 / NBRC 103641 / GraBd1</strain>
    </source>
</reference>
<name>SYV_SYNC1</name>
<protein>
    <recommendedName>
        <fullName evidence="1">Valine--tRNA ligase</fullName>
        <ecNumber evidence="1">6.1.1.9</ecNumber>
    </recommendedName>
    <alternativeName>
        <fullName evidence="1">Valyl-tRNA synthetase</fullName>
        <shortName evidence="1">ValRS</shortName>
    </alternativeName>
</protein>
<sequence length="899" mass="102025">MSQSCMFCPKDELPMEPKLPKGYEPHDVEAKWYEFWTENGLFHADENSPKNPFSIVIPPPNVTGVLHMGHALNNTLQDILARWKRMDGHEVLWQPGTDHAGIATQNVVEKQLAAEGSSRHDLGREGFVDRVWQWRTESGGQIINQLKRLGASCDWERERFTMDEGLSRAVREVFVTLYEEGLIYRDNRLINWCPRCHTALSDLEVEHQDQKGNLWHLRYPVVGTDRHLVVATTRPETMLGDTAVAVHPEDERYADLIGKFIMLPLMDRQIPIIADEYVDKEFGSGAVKITPAHDFNDFEIGKRHDLEFINIFDESGVVNGNGGRYQGLERFEARTRVLADLDAAGLLEQTEEHLNAVGECYRCKTVIEPYMSLQWYVNVQPLAEKAIEAVQTGQTRIIPQQWEKTYFEWMFNIRDWCISRQIWWGHRIPAWFCAACNEVTVSREDPTACSHCGATELRQETDVLDTWFSSALWPFSTMGWPDKTVALEKFYPTSCLVTGFDILFFWVARMMMMGLKFMGQVPFKDVYIHALVRDAQGQKMSKSKGNVIDPLTVIDEYGTDAFRFTLAAFAAQGRDVKLSVDRIAGYRNFVNKLWNASRFALMNLEDFDPSGIDLDDCQLTLAERWILTRLIDVAAETGKALEEYKFNEAASVLYAFTWHEFCDWYIELSKDDLYGEDAARKATSQAVLYTVLEQLLRLLHPLMPFVTEEIWQALPGERPAVSIMSAAFSTVSELPEDRQGASHMERIMDVIKGVRNIRGEMNVPPGKRIAAVLDCKTSKAAEVMAAGEGYIKSLARIDDLAFGVAVERPAQAATQVAGDIEILLPLAGLIDLDEEQKRLNKEIAKVEKDVLMFSKKLSNESFLAKAPAAVLEKDRQKLADAEEKLSILKQGLEKLAALQ</sequence>